<reference key="1">
    <citation type="journal article" date="1988" name="J. Bacteriol.">
        <title>Primary structure and mapping of the hupA gene of Salmonella typhimurium.</title>
        <authorList>
            <person name="Higgins N.P."/>
            <person name="Hillyard D."/>
        </authorList>
    </citation>
    <scope>NUCLEOTIDE SEQUENCE [GENOMIC DNA]</scope>
</reference>
<reference key="2">
    <citation type="journal article" date="2001" name="Nature">
        <title>Complete genome sequence of Salmonella enterica serovar Typhimurium LT2.</title>
        <authorList>
            <person name="McClelland M."/>
            <person name="Sanderson K.E."/>
            <person name="Spieth J."/>
            <person name="Clifton S.W."/>
            <person name="Latreille P."/>
            <person name="Courtney L."/>
            <person name="Porwollik S."/>
            <person name="Ali J."/>
            <person name="Dante M."/>
            <person name="Du F."/>
            <person name="Hou S."/>
            <person name="Layman D."/>
            <person name="Leonard S."/>
            <person name="Nguyen C."/>
            <person name="Scott K."/>
            <person name="Holmes A."/>
            <person name="Grewal N."/>
            <person name="Mulvaney E."/>
            <person name="Ryan E."/>
            <person name="Sun H."/>
            <person name="Florea L."/>
            <person name="Miller W."/>
            <person name="Stoneking T."/>
            <person name="Nhan M."/>
            <person name="Waterston R."/>
            <person name="Wilson R.K."/>
        </authorList>
    </citation>
    <scope>NUCLEOTIDE SEQUENCE [LARGE SCALE GENOMIC DNA]</scope>
    <source>
        <strain>LT2 / SGSC1412 / ATCC 700720</strain>
    </source>
</reference>
<keyword id="KW-0226">DNA condensation</keyword>
<keyword id="KW-0238">DNA-binding</keyword>
<keyword id="KW-1185">Reference proteome</keyword>
<accession>P0A1R6</accession>
<accession>P15148</accession>
<name>DBHA_SALTY</name>
<gene>
    <name type="primary">hupA</name>
    <name type="ordered locus">STM4170</name>
    <name type="ORF">STMF1.24</name>
</gene>
<evidence type="ECO:0000305" key="1"/>
<dbReference type="EMBL" id="M22975">
    <property type="protein sequence ID" value="AAA27147.1"/>
    <property type="molecule type" value="Genomic_DNA"/>
</dbReference>
<dbReference type="EMBL" id="AF170176">
    <property type="protein sequence ID" value="AAF33503.1"/>
    <property type="molecule type" value="Genomic_DNA"/>
</dbReference>
<dbReference type="EMBL" id="AE006468">
    <property type="protein sequence ID" value="AAL22998.1"/>
    <property type="molecule type" value="Genomic_DNA"/>
</dbReference>
<dbReference type="PIR" id="A31388">
    <property type="entry name" value="A31388"/>
</dbReference>
<dbReference type="RefSeq" id="NP_463039.1">
    <property type="nucleotide sequence ID" value="NC_003197.2"/>
</dbReference>
<dbReference type="RefSeq" id="WP_001044509.1">
    <property type="nucleotide sequence ID" value="NC_003197.2"/>
</dbReference>
<dbReference type="SMR" id="P0A1R6"/>
<dbReference type="STRING" id="99287.STM4170"/>
<dbReference type="PaxDb" id="99287-STM4170"/>
<dbReference type="GeneID" id="1255696"/>
<dbReference type="GeneID" id="98391144"/>
<dbReference type="KEGG" id="stm:STM4170"/>
<dbReference type="PATRIC" id="fig|99287.12.peg.4384"/>
<dbReference type="HOGENOM" id="CLU_105066_3_1_6"/>
<dbReference type="OMA" id="ISQEKQC"/>
<dbReference type="PhylomeDB" id="P0A1R6"/>
<dbReference type="BioCyc" id="SENT99287:STM4170-MONOMER"/>
<dbReference type="PRO" id="PR:P0A1R6"/>
<dbReference type="Proteomes" id="UP000001014">
    <property type="component" value="Chromosome"/>
</dbReference>
<dbReference type="GO" id="GO:0005829">
    <property type="term" value="C:cytosol"/>
    <property type="evidence" value="ECO:0000318"/>
    <property type="project" value="GO_Central"/>
</dbReference>
<dbReference type="GO" id="GO:0003677">
    <property type="term" value="F:DNA binding"/>
    <property type="evidence" value="ECO:0000318"/>
    <property type="project" value="GO_Central"/>
</dbReference>
<dbReference type="GO" id="GO:0030527">
    <property type="term" value="F:structural constituent of chromatin"/>
    <property type="evidence" value="ECO:0007669"/>
    <property type="project" value="InterPro"/>
</dbReference>
<dbReference type="GO" id="GO:0030261">
    <property type="term" value="P:chromosome condensation"/>
    <property type="evidence" value="ECO:0007669"/>
    <property type="project" value="UniProtKB-KW"/>
</dbReference>
<dbReference type="CDD" id="cd13831">
    <property type="entry name" value="HU"/>
    <property type="match status" value="1"/>
</dbReference>
<dbReference type="FunFam" id="4.10.520.10:FF:000001">
    <property type="entry name" value="DNA-binding protein HU"/>
    <property type="match status" value="1"/>
</dbReference>
<dbReference type="Gene3D" id="4.10.520.10">
    <property type="entry name" value="IHF-like DNA-binding proteins"/>
    <property type="match status" value="1"/>
</dbReference>
<dbReference type="InterPro" id="IPR000119">
    <property type="entry name" value="Hist_DNA-bd"/>
</dbReference>
<dbReference type="InterPro" id="IPR020816">
    <property type="entry name" value="Histone-like_DNA-bd_CS"/>
</dbReference>
<dbReference type="InterPro" id="IPR010992">
    <property type="entry name" value="IHF-like_DNA-bd_dom_sf"/>
</dbReference>
<dbReference type="NCBIfam" id="NF008023">
    <property type="entry name" value="PRK10753.1"/>
    <property type="match status" value="1"/>
</dbReference>
<dbReference type="PANTHER" id="PTHR33175">
    <property type="entry name" value="DNA-BINDING PROTEIN HU"/>
    <property type="match status" value="1"/>
</dbReference>
<dbReference type="PANTHER" id="PTHR33175:SF12">
    <property type="entry name" value="DNA-BINDING PROTEIN HU-ALPHA"/>
    <property type="match status" value="1"/>
</dbReference>
<dbReference type="Pfam" id="PF00216">
    <property type="entry name" value="Bac_DNA_binding"/>
    <property type="match status" value="1"/>
</dbReference>
<dbReference type="PRINTS" id="PR01727">
    <property type="entry name" value="DNABINDINGHU"/>
</dbReference>
<dbReference type="SMART" id="SM00411">
    <property type="entry name" value="BHL"/>
    <property type="match status" value="1"/>
</dbReference>
<dbReference type="SUPFAM" id="SSF47729">
    <property type="entry name" value="IHF-like DNA-binding proteins"/>
    <property type="match status" value="1"/>
</dbReference>
<dbReference type="PROSITE" id="PS00045">
    <property type="entry name" value="HISTONE_LIKE"/>
    <property type="match status" value="1"/>
</dbReference>
<organism>
    <name type="scientific">Salmonella typhimurium (strain LT2 / SGSC1412 / ATCC 700720)</name>
    <dbReference type="NCBI Taxonomy" id="99287"/>
    <lineage>
        <taxon>Bacteria</taxon>
        <taxon>Pseudomonadati</taxon>
        <taxon>Pseudomonadota</taxon>
        <taxon>Gammaproteobacteria</taxon>
        <taxon>Enterobacterales</taxon>
        <taxon>Enterobacteriaceae</taxon>
        <taxon>Salmonella</taxon>
    </lineage>
</organism>
<proteinExistence type="inferred from homology"/>
<sequence>MNKTQLIDVIADKAELSKTQAKAALESTLAAITESLKEGDAVQLVGFGTFKVNHRAERTGRNPQTGKEIKIAAANVPAFVSGKALKDAVK</sequence>
<protein>
    <recommendedName>
        <fullName>DNA-binding protein HU-alpha</fullName>
    </recommendedName>
    <alternativeName>
        <fullName>HU-2</fullName>
    </alternativeName>
    <alternativeName>
        <fullName>NS2</fullName>
    </alternativeName>
</protein>
<feature type="chain" id="PRO_0000104969" description="DNA-binding protein HU-alpha">
    <location>
        <begin position="1"/>
        <end position="90"/>
    </location>
</feature>
<comment type="function">
    <text>Histone-like DNA-binding protein which is capable of wrapping DNA to stabilize it, and thus to prevent its denaturation under extreme environmental conditions.</text>
</comment>
<comment type="subunit">
    <text>Heterodimer of an alpha and a beta chain.</text>
</comment>
<comment type="similarity">
    <text evidence="1">Belongs to the bacterial histone-like protein family.</text>
</comment>